<feature type="transit peptide" description="Chloroplast" evidence="2">
    <location>
        <begin position="1"/>
        <end position="45"/>
    </location>
</feature>
<feature type="chain" id="PRO_0000235209" description="Protein THYLAKOID FORMATION1, chloroplastic">
    <location>
        <begin position="46"/>
        <end position="293"/>
    </location>
</feature>
<feature type="topological domain" description="Chloroplast intermembrane" evidence="2">
    <location>
        <begin position="46"/>
        <end position="197"/>
    </location>
</feature>
<feature type="transmembrane region" description="Helical" evidence="2">
    <location>
        <begin position="198"/>
        <end position="220"/>
    </location>
</feature>
<feature type="topological domain" description="Cytoplasmic" evidence="2">
    <location>
        <begin position="221"/>
        <end position="293"/>
    </location>
</feature>
<feature type="coiled-coil region" evidence="2">
    <location>
        <begin position="240"/>
        <end position="273"/>
    </location>
</feature>
<dbReference type="EMBL" id="AY342161">
    <property type="protein sequence ID" value="AAQ19850.1"/>
    <property type="molecule type" value="mRNA"/>
</dbReference>
<dbReference type="RefSeq" id="NP_001275338.1">
    <property type="nucleotide sequence ID" value="NM_001288409.1"/>
</dbReference>
<dbReference type="SMR" id="Q7XAB8"/>
<dbReference type="FunCoup" id="Q7XAB8">
    <property type="interactions" value="1445"/>
</dbReference>
<dbReference type="STRING" id="4113.Q7XAB8"/>
<dbReference type="PaxDb" id="4113-PGSC0003DMT400047218"/>
<dbReference type="GeneID" id="102577610"/>
<dbReference type="KEGG" id="sot:102577610"/>
<dbReference type="eggNOG" id="ENOG502QUQV">
    <property type="taxonomic scope" value="Eukaryota"/>
</dbReference>
<dbReference type="InParanoid" id="Q7XAB8"/>
<dbReference type="OrthoDB" id="4812at2759"/>
<dbReference type="Proteomes" id="UP000011115">
    <property type="component" value="Unassembled WGS sequence"/>
</dbReference>
<dbReference type="ExpressionAtlas" id="Q7XAB8">
    <property type="expression patterns" value="baseline and differential"/>
</dbReference>
<dbReference type="GO" id="GO:0009707">
    <property type="term" value="C:chloroplast outer membrane"/>
    <property type="evidence" value="ECO:0007669"/>
    <property type="project" value="UniProtKB-SubCell"/>
</dbReference>
<dbReference type="GO" id="GO:0009570">
    <property type="term" value="C:chloroplast stroma"/>
    <property type="evidence" value="ECO:0007669"/>
    <property type="project" value="UniProtKB-SubCell"/>
</dbReference>
<dbReference type="GO" id="GO:0010207">
    <property type="term" value="P:photosystem II assembly"/>
    <property type="evidence" value="ECO:0007669"/>
    <property type="project" value="InterPro"/>
</dbReference>
<dbReference type="GO" id="GO:0045037">
    <property type="term" value="P:protein import into chloroplast stroma"/>
    <property type="evidence" value="ECO:0000318"/>
    <property type="project" value="GO_Central"/>
</dbReference>
<dbReference type="GO" id="GO:0045038">
    <property type="term" value="P:protein import into chloroplast thylakoid membrane"/>
    <property type="evidence" value="ECO:0000318"/>
    <property type="project" value="GO_Central"/>
</dbReference>
<dbReference type="GO" id="GO:0010027">
    <property type="term" value="P:thylakoid membrane organization"/>
    <property type="evidence" value="ECO:0000318"/>
    <property type="project" value="GO_Central"/>
</dbReference>
<dbReference type="HAMAP" id="MF_01843">
    <property type="entry name" value="Thf1"/>
    <property type="match status" value="1"/>
</dbReference>
<dbReference type="InterPro" id="IPR017499">
    <property type="entry name" value="Thf1"/>
</dbReference>
<dbReference type="NCBIfam" id="TIGR03060">
    <property type="entry name" value="PS_II_psb29"/>
    <property type="match status" value="1"/>
</dbReference>
<dbReference type="PANTHER" id="PTHR34793">
    <property type="entry name" value="PROTEIN THYLAKOID FORMATION 1, CHLOROPLASTIC"/>
    <property type="match status" value="1"/>
</dbReference>
<dbReference type="PANTHER" id="PTHR34793:SF1">
    <property type="entry name" value="PROTEIN THYLAKOID FORMATION 1, CHLOROPLASTIC"/>
    <property type="match status" value="1"/>
</dbReference>
<dbReference type="Pfam" id="PF11264">
    <property type="entry name" value="ThylakoidFormat"/>
    <property type="match status" value="1"/>
</dbReference>
<evidence type="ECO:0000250" key="1"/>
<evidence type="ECO:0000255" key="2"/>
<evidence type="ECO:0000305" key="3"/>
<comment type="function">
    <text evidence="1">Involved in a dynamic process of vesicle-mediated thylakoid membrane biogenesis. Required for the normal organization of vesicles into mature thylakoid stacks and ultimately for leaf development (By similarity).</text>
</comment>
<comment type="subcellular location">
    <subcellularLocation>
        <location>Plastid</location>
        <location>Chloroplast outer membrane</location>
        <topology>Single-pass membrane protein</topology>
    </subcellularLocation>
    <subcellularLocation>
        <location evidence="1">Plastid</location>
        <location evidence="1">Chloroplast stroma</location>
    </subcellularLocation>
</comment>
<comment type="similarity">
    <text evidence="3">Belongs to the THF1 family.</text>
</comment>
<sequence length="293" mass="33361">MAAVTSVSFSAITQSAERKSSVSSSRSIDTFRFRSNFSFDSVNVRSSNSTSRFVVHCTSSSAADLPTVADTKLKFLTAYKRPIPTVYNTVLQELIVQQHLTRYKKSYQYDPVFALGFVTVYDQLMEGYPSEEDRNAIFKAYIEALKEDPEQYRADAQKLEEWARTQNANTLVDFSSKEGEIENIFKDIAQRAGTKDGFCYSRLFAVGLFRLLELANVTDPTILEKLCAALNVNKKSVDRDLDVYRNLLSKLVQAKELLKEYVEREKKKRGERETQKANETVTKCLGDYQYAGR</sequence>
<reference key="1">
    <citation type="journal article" date="2004" name="Plant Physiol.">
        <title>Deletion of the chloroplast-localized thylakoid formation1 gene product in Arabidopsis leads to deficient thylakoid formation and variegated leaves.</title>
        <authorList>
            <person name="Wang Q."/>
            <person name="Sullivan R.W."/>
            <person name="Kight A."/>
            <person name="Henry R.L."/>
            <person name="Huang J."/>
            <person name="Jones A.M."/>
            <person name="Korth K.L."/>
        </authorList>
    </citation>
    <scope>NUCLEOTIDE SEQUENCE [MRNA]</scope>
</reference>
<keyword id="KW-0150">Chloroplast</keyword>
<keyword id="KW-0175">Coiled coil</keyword>
<keyword id="KW-0472">Membrane</keyword>
<keyword id="KW-0934">Plastid</keyword>
<keyword id="KW-1002">Plastid outer membrane</keyword>
<keyword id="KW-1185">Reference proteome</keyword>
<keyword id="KW-0809">Transit peptide</keyword>
<keyword id="KW-0812">Transmembrane</keyword>
<keyword id="KW-1133">Transmembrane helix</keyword>
<organism>
    <name type="scientific">Solanum tuberosum</name>
    <name type="common">Potato</name>
    <dbReference type="NCBI Taxonomy" id="4113"/>
    <lineage>
        <taxon>Eukaryota</taxon>
        <taxon>Viridiplantae</taxon>
        <taxon>Streptophyta</taxon>
        <taxon>Embryophyta</taxon>
        <taxon>Tracheophyta</taxon>
        <taxon>Spermatophyta</taxon>
        <taxon>Magnoliopsida</taxon>
        <taxon>eudicotyledons</taxon>
        <taxon>Gunneridae</taxon>
        <taxon>Pentapetalae</taxon>
        <taxon>asterids</taxon>
        <taxon>lamiids</taxon>
        <taxon>Solanales</taxon>
        <taxon>Solanaceae</taxon>
        <taxon>Solanoideae</taxon>
        <taxon>Solaneae</taxon>
        <taxon>Solanum</taxon>
    </lineage>
</organism>
<name>THF1_SOLTU</name>
<gene>
    <name type="primary">THF1</name>
</gene>
<proteinExistence type="evidence at transcript level"/>
<accession>Q7XAB8</accession>
<protein>
    <recommendedName>
        <fullName>Protein THYLAKOID FORMATION1, chloroplastic</fullName>
    </recommendedName>
</protein>